<reference key="1">
    <citation type="journal article" date="2008" name="PLoS ONE">
        <title>A recalibrated molecular clock and independent origins for the cholera pandemic clones.</title>
        <authorList>
            <person name="Feng L."/>
            <person name="Reeves P.R."/>
            <person name="Lan R."/>
            <person name="Ren Y."/>
            <person name="Gao C."/>
            <person name="Zhou Z."/>
            <person name="Ren Y."/>
            <person name="Cheng J."/>
            <person name="Wang W."/>
            <person name="Wang J."/>
            <person name="Qian W."/>
            <person name="Li D."/>
            <person name="Wang L."/>
        </authorList>
    </citation>
    <scope>NUCLEOTIDE SEQUENCE [LARGE SCALE GENOMIC DNA]</scope>
    <source>
        <strain>M66-2</strain>
    </source>
</reference>
<keyword id="KW-0119">Carbohydrate metabolism</keyword>
<keyword id="KW-0378">Hydrolase</keyword>
<keyword id="KW-0460">Magnesium</keyword>
<keyword id="KW-0479">Metal-binding</keyword>
<proteinExistence type="inferred from homology"/>
<organism>
    <name type="scientific">Vibrio cholerae serotype O1 (strain M66-2)</name>
    <dbReference type="NCBI Taxonomy" id="579112"/>
    <lineage>
        <taxon>Bacteria</taxon>
        <taxon>Pseudomonadati</taxon>
        <taxon>Pseudomonadota</taxon>
        <taxon>Gammaproteobacteria</taxon>
        <taxon>Vibrionales</taxon>
        <taxon>Vibrionaceae</taxon>
        <taxon>Vibrio</taxon>
    </lineage>
</organism>
<feature type="chain" id="PRO_1000165050" description="Carbohydrate deacetylase">
    <location>
        <begin position="1"/>
        <end position="252"/>
    </location>
</feature>
<feature type="binding site" evidence="1">
    <location>
        <position position="59"/>
    </location>
    <ligand>
        <name>Mg(2+)</name>
        <dbReference type="ChEBI" id="CHEBI:18420"/>
    </ligand>
</feature>
<feature type="binding site" evidence="1">
    <location>
        <position position="122"/>
    </location>
    <ligand>
        <name>Mg(2+)</name>
        <dbReference type="ChEBI" id="CHEBI:18420"/>
    </ligand>
</feature>
<comment type="function">
    <text evidence="1">Probably catalyzes the deacetylation of acetylated carbohydrates an important step in the degradation of oligosaccharides.</text>
</comment>
<comment type="cofactor">
    <cofactor evidence="1">
        <name>Mg(2+)</name>
        <dbReference type="ChEBI" id="CHEBI:18420"/>
    </cofactor>
</comment>
<comment type="subunit">
    <text evidence="1">Homodimer.</text>
</comment>
<comment type="similarity">
    <text evidence="1">Belongs to the YdjC deacetylase family.</text>
</comment>
<gene>
    <name type="ordered locus">VCM66_1240</name>
</gene>
<sequence length="252" mass="28663">MKVIFNADDFGLTQGVNQGIVKAHLDGVVKSTTLMVGMPAEQHAVQLAKQLPDLKIGLHLRFTAGRPLTGERNLTDEHGVFTAYRDFWQRRDYQPEAIYHEAIAQVEHFLKLGLTLSHLDSHHHAHTHPQLAPIIYEVAKKYHVPLRDIGMAGEEAFGCRYHFTDFFYDQRLGIDPLMKHLLELKERFDLVEVMCHPAFVDPLLEKCSGYAKQREEELHILTSAQLIQLLVAHDIEITDYSALISAPLHSCV</sequence>
<protein>
    <recommendedName>
        <fullName evidence="1">Carbohydrate deacetylase</fullName>
        <ecNumber evidence="1">3.5.1.-</ecNumber>
    </recommendedName>
</protein>
<dbReference type="EC" id="3.5.1.-" evidence="1"/>
<dbReference type="EMBL" id="CP001233">
    <property type="protein sequence ID" value="ACP05557.1"/>
    <property type="molecule type" value="Genomic_DNA"/>
</dbReference>
<dbReference type="SMR" id="C3LLY1"/>
<dbReference type="KEGG" id="vcm:VCM66_1240"/>
<dbReference type="HOGENOM" id="CLU_064244_4_0_6"/>
<dbReference type="Proteomes" id="UP000001217">
    <property type="component" value="Chromosome I"/>
</dbReference>
<dbReference type="GO" id="GO:0019213">
    <property type="term" value="F:deacetylase activity"/>
    <property type="evidence" value="ECO:0007669"/>
    <property type="project" value="TreeGrafter"/>
</dbReference>
<dbReference type="GO" id="GO:0016811">
    <property type="term" value="F:hydrolase activity, acting on carbon-nitrogen (but not peptide) bonds, in linear amides"/>
    <property type="evidence" value="ECO:0007669"/>
    <property type="project" value="UniProtKB-UniRule"/>
</dbReference>
<dbReference type="GO" id="GO:0046872">
    <property type="term" value="F:metal ion binding"/>
    <property type="evidence" value="ECO:0007669"/>
    <property type="project" value="UniProtKB-KW"/>
</dbReference>
<dbReference type="GO" id="GO:0000272">
    <property type="term" value="P:polysaccharide catabolic process"/>
    <property type="evidence" value="ECO:0007669"/>
    <property type="project" value="InterPro"/>
</dbReference>
<dbReference type="CDD" id="cd10803">
    <property type="entry name" value="YdjC_EF3048_like"/>
    <property type="match status" value="1"/>
</dbReference>
<dbReference type="FunFam" id="3.20.20.370:FF:000015">
    <property type="entry name" value="Carbohydrate deacetylase"/>
    <property type="match status" value="1"/>
</dbReference>
<dbReference type="Gene3D" id="3.20.20.370">
    <property type="entry name" value="Glycoside hydrolase/deacetylase"/>
    <property type="match status" value="1"/>
</dbReference>
<dbReference type="HAMAP" id="MF_01246">
    <property type="entry name" value="COD"/>
    <property type="match status" value="1"/>
</dbReference>
<dbReference type="InterPro" id="IPR022948">
    <property type="entry name" value="COD_ChbG_bac"/>
</dbReference>
<dbReference type="InterPro" id="IPR011330">
    <property type="entry name" value="Glyco_hydro/deAcase_b/a-brl"/>
</dbReference>
<dbReference type="InterPro" id="IPR006879">
    <property type="entry name" value="YdjC-like"/>
</dbReference>
<dbReference type="NCBIfam" id="NF002559">
    <property type="entry name" value="PRK02134.1"/>
    <property type="match status" value="1"/>
</dbReference>
<dbReference type="PANTHER" id="PTHR31609:SF1">
    <property type="entry name" value="CARBOHYDRATE DEACETYLASE"/>
    <property type="match status" value="1"/>
</dbReference>
<dbReference type="PANTHER" id="PTHR31609">
    <property type="entry name" value="YDJC DEACETYLASE FAMILY MEMBER"/>
    <property type="match status" value="1"/>
</dbReference>
<dbReference type="Pfam" id="PF04794">
    <property type="entry name" value="YdjC"/>
    <property type="match status" value="1"/>
</dbReference>
<dbReference type="SUPFAM" id="SSF88713">
    <property type="entry name" value="Glycoside hydrolase/deacetylase"/>
    <property type="match status" value="1"/>
</dbReference>
<accession>C3LLY1</accession>
<evidence type="ECO:0000255" key="1">
    <source>
        <dbReference type="HAMAP-Rule" id="MF_01246"/>
    </source>
</evidence>
<name>YDJC_VIBCM</name>